<comment type="function">
    <text evidence="1">Catalyzes the formation of S-adenosylmethionine (AdoMet) from methionine and ATP. The overall synthetic reaction is composed of two sequential steps, AdoMet formation and the subsequent tripolyphosphate hydrolysis which occurs prior to release of AdoMet from the enzyme.</text>
</comment>
<comment type="catalytic activity">
    <reaction evidence="1">
        <text>L-methionine + ATP + H2O = S-adenosyl-L-methionine + phosphate + diphosphate</text>
        <dbReference type="Rhea" id="RHEA:21080"/>
        <dbReference type="ChEBI" id="CHEBI:15377"/>
        <dbReference type="ChEBI" id="CHEBI:30616"/>
        <dbReference type="ChEBI" id="CHEBI:33019"/>
        <dbReference type="ChEBI" id="CHEBI:43474"/>
        <dbReference type="ChEBI" id="CHEBI:57844"/>
        <dbReference type="ChEBI" id="CHEBI:59789"/>
        <dbReference type="EC" id="2.5.1.6"/>
    </reaction>
</comment>
<comment type="cofactor">
    <cofactor evidence="1">
        <name>Mg(2+)</name>
        <dbReference type="ChEBI" id="CHEBI:18420"/>
    </cofactor>
    <text evidence="1">Binds 2 divalent ions per subunit.</text>
</comment>
<comment type="cofactor">
    <cofactor evidence="1">
        <name>K(+)</name>
        <dbReference type="ChEBI" id="CHEBI:29103"/>
    </cofactor>
    <text evidence="1">Binds 1 potassium ion per subunit.</text>
</comment>
<comment type="pathway">
    <text evidence="1">Amino-acid biosynthesis; S-adenosyl-L-methionine biosynthesis; S-adenosyl-L-methionine from L-methionine: step 1/1.</text>
</comment>
<comment type="subunit">
    <text evidence="1">Homotetramer; dimer of dimers.</text>
</comment>
<comment type="subcellular location">
    <subcellularLocation>
        <location evidence="1">Cytoplasm</location>
    </subcellularLocation>
</comment>
<comment type="similarity">
    <text evidence="1">Belongs to the AdoMet synthase family.</text>
</comment>
<dbReference type="EC" id="2.5.1.6" evidence="1"/>
<dbReference type="EMBL" id="CP000096">
    <property type="protein sequence ID" value="ABB23550.1"/>
    <property type="molecule type" value="Genomic_DNA"/>
</dbReference>
<dbReference type="RefSeq" id="WP_011357425.1">
    <property type="nucleotide sequence ID" value="NC_007512.1"/>
</dbReference>
<dbReference type="SMR" id="Q3B531"/>
<dbReference type="STRING" id="319225.Plut_0672"/>
<dbReference type="KEGG" id="plt:Plut_0672"/>
<dbReference type="eggNOG" id="COG0192">
    <property type="taxonomic scope" value="Bacteria"/>
</dbReference>
<dbReference type="HOGENOM" id="CLU_041802_1_1_10"/>
<dbReference type="OrthoDB" id="9801686at2"/>
<dbReference type="UniPathway" id="UPA00315">
    <property type="reaction ID" value="UER00080"/>
</dbReference>
<dbReference type="Proteomes" id="UP000002709">
    <property type="component" value="Chromosome"/>
</dbReference>
<dbReference type="GO" id="GO:0005737">
    <property type="term" value="C:cytoplasm"/>
    <property type="evidence" value="ECO:0007669"/>
    <property type="project" value="UniProtKB-SubCell"/>
</dbReference>
<dbReference type="GO" id="GO:0005524">
    <property type="term" value="F:ATP binding"/>
    <property type="evidence" value="ECO:0007669"/>
    <property type="project" value="UniProtKB-UniRule"/>
</dbReference>
<dbReference type="GO" id="GO:0000287">
    <property type="term" value="F:magnesium ion binding"/>
    <property type="evidence" value="ECO:0007669"/>
    <property type="project" value="UniProtKB-UniRule"/>
</dbReference>
<dbReference type="GO" id="GO:0004478">
    <property type="term" value="F:methionine adenosyltransferase activity"/>
    <property type="evidence" value="ECO:0007669"/>
    <property type="project" value="UniProtKB-UniRule"/>
</dbReference>
<dbReference type="GO" id="GO:0006730">
    <property type="term" value="P:one-carbon metabolic process"/>
    <property type="evidence" value="ECO:0007669"/>
    <property type="project" value="UniProtKB-KW"/>
</dbReference>
<dbReference type="GO" id="GO:0006556">
    <property type="term" value="P:S-adenosylmethionine biosynthetic process"/>
    <property type="evidence" value="ECO:0007669"/>
    <property type="project" value="UniProtKB-UniRule"/>
</dbReference>
<dbReference type="CDD" id="cd18079">
    <property type="entry name" value="S-AdoMet_synt"/>
    <property type="match status" value="1"/>
</dbReference>
<dbReference type="FunFam" id="3.30.300.10:FF:000003">
    <property type="entry name" value="S-adenosylmethionine synthase"/>
    <property type="match status" value="1"/>
</dbReference>
<dbReference type="Gene3D" id="3.30.300.10">
    <property type="match status" value="3"/>
</dbReference>
<dbReference type="HAMAP" id="MF_00086">
    <property type="entry name" value="S_AdoMet_synth1"/>
    <property type="match status" value="1"/>
</dbReference>
<dbReference type="InterPro" id="IPR022631">
    <property type="entry name" value="ADOMET_SYNTHASE_CS"/>
</dbReference>
<dbReference type="InterPro" id="IPR022630">
    <property type="entry name" value="S-AdoMet_synt_C"/>
</dbReference>
<dbReference type="InterPro" id="IPR022629">
    <property type="entry name" value="S-AdoMet_synt_central"/>
</dbReference>
<dbReference type="InterPro" id="IPR022628">
    <property type="entry name" value="S-AdoMet_synt_N"/>
</dbReference>
<dbReference type="InterPro" id="IPR002133">
    <property type="entry name" value="S-AdoMet_synthetase"/>
</dbReference>
<dbReference type="InterPro" id="IPR022636">
    <property type="entry name" value="S-AdoMet_synthetase_sfam"/>
</dbReference>
<dbReference type="NCBIfam" id="TIGR01034">
    <property type="entry name" value="metK"/>
    <property type="match status" value="1"/>
</dbReference>
<dbReference type="PANTHER" id="PTHR11964">
    <property type="entry name" value="S-ADENOSYLMETHIONINE SYNTHETASE"/>
    <property type="match status" value="1"/>
</dbReference>
<dbReference type="Pfam" id="PF02773">
    <property type="entry name" value="S-AdoMet_synt_C"/>
    <property type="match status" value="1"/>
</dbReference>
<dbReference type="Pfam" id="PF02772">
    <property type="entry name" value="S-AdoMet_synt_M"/>
    <property type="match status" value="1"/>
</dbReference>
<dbReference type="Pfam" id="PF00438">
    <property type="entry name" value="S-AdoMet_synt_N"/>
    <property type="match status" value="1"/>
</dbReference>
<dbReference type="PIRSF" id="PIRSF000497">
    <property type="entry name" value="MAT"/>
    <property type="match status" value="1"/>
</dbReference>
<dbReference type="SUPFAM" id="SSF55973">
    <property type="entry name" value="S-adenosylmethionine synthetase"/>
    <property type="match status" value="3"/>
</dbReference>
<dbReference type="PROSITE" id="PS00376">
    <property type="entry name" value="ADOMET_SYNTHASE_1"/>
    <property type="match status" value="1"/>
</dbReference>
<dbReference type="PROSITE" id="PS00377">
    <property type="entry name" value="ADOMET_SYNTHASE_2"/>
    <property type="match status" value="1"/>
</dbReference>
<protein>
    <recommendedName>
        <fullName evidence="1">S-adenosylmethionine synthase</fullName>
        <shortName evidence="1">AdoMet synthase</shortName>
        <ecNumber evidence="1">2.5.1.6</ecNumber>
    </recommendedName>
    <alternativeName>
        <fullName evidence="1">MAT</fullName>
    </alternativeName>
    <alternativeName>
        <fullName evidence="1">Methionine adenosyltransferase</fullName>
    </alternativeName>
</protein>
<proteinExistence type="inferred from homology"/>
<sequence length="404" mass="44024">MSQSRYFFTSESVSEGHPDKVADQISDAVLDDFIRQDPNSRVACETFVTTGQVIVGGEVTTTGIVDVQKIARKVITEIGYTKGEYMFEANSCGVLSALHSQSADINRGVDRKEAIADEFDRVGAGDQGMMFGYACTETPELMPAAIQFAQQLVKVLADIRKAGKIMTYLRPDAKSQVTLEYVDEKVARVDAVVVSTQHDPEPAGMSEAEFQEVIKKDIIENVIKKVIPANLLDLNTKFHINPTGRFEIGGPHGDTGLTGRKIIVDTYGGAAPHGGGAFSGKDPSKVDRSAAYASRHVAKNIVAAGLAEKCTVQVSYAIGVARPVSIYINTHGTAMHGLSDEQIQEKAEKIFDLRPLAIIRRFSLDNPQGWCYQETAAYGHFGRDIFPWEKTEKVAELKTAFSLA</sequence>
<accession>Q3B531</accession>
<gene>
    <name evidence="1" type="primary">metK</name>
    <name type="ordered locus">Plut_0672</name>
</gene>
<name>METK_CHLL3</name>
<organism>
    <name type="scientific">Chlorobium luteolum (strain DSM 273 / BCRC 81028 / 2530)</name>
    <name type="common">Pelodictyon luteolum</name>
    <dbReference type="NCBI Taxonomy" id="319225"/>
    <lineage>
        <taxon>Bacteria</taxon>
        <taxon>Pseudomonadati</taxon>
        <taxon>Chlorobiota</taxon>
        <taxon>Chlorobiia</taxon>
        <taxon>Chlorobiales</taxon>
        <taxon>Chlorobiaceae</taxon>
        <taxon>Chlorobium/Pelodictyon group</taxon>
        <taxon>Pelodictyon</taxon>
    </lineage>
</organism>
<evidence type="ECO:0000255" key="1">
    <source>
        <dbReference type="HAMAP-Rule" id="MF_00086"/>
    </source>
</evidence>
<reference key="1">
    <citation type="submission" date="2005-08" db="EMBL/GenBank/DDBJ databases">
        <title>Complete sequence of Pelodictyon luteolum DSM 273.</title>
        <authorList>
            <consortium name="US DOE Joint Genome Institute"/>
            <person name="Copeland A."/>
            <person name="Lucas S."/>
            <person name="Lapidus A."/>
            <person name="Barry K."/>
            <person name="Detter J.C."/>
            <person name="Glavina T."/>
            <person name="Hammon N."/>
            <person name="Israni S."/>
            <person name="Pitluck S."/>
            <person name="Bryant D."/>
            <person name="Schmutz J."/>
            <person name="Larimer F."/>
            <person name="Land M."/>
            <person name="Kyrpides N."/>
            <person name="Ivanova N."/>
            <person name="Richardson P."/>
        </authorList>
    </citation>
    <scope>NUCLEOTIDE SEQUENCE [LARGE SCALE GENOMIC DNA]</scope>
    <source>
        <strain>DSM 273 / BCRC 81028 / 2530</strain>
    </source>
</reference>
<keyword id="KW-0067">ATP-binding</keyword>
<keyword id="KW-0963">Cytoplasm</keyword>
<keyword id="KW-0460">Magnesium</keyword>
<keyword id="KW-0479">Metal-binding</keyword>
<keyword id="KW-0547">Nucleotide-binding</keyword>
<keyword id="KW-0554">One-carbon metabolism</keyword>
<keyword id="KW-0630">Potassium</keyword>
<keyword id="KW-1185">Reference proteome</keyword>
<keyword id="KW-0808">Transferase</keyword>
<feature type="chain" id="PRO_0000241014" description="S-adenosylmethionine synthase">
    <location>
        <begin position="1"/>
        <end position="404"/>
    </location>
</feature>
<feature type="region of interest" description="Flexible loop" evidence="1">
    <location>
        <begin position="101"/>
        <end position="111"/>
    </location>
</feature>
<feature type="binding site" description="in other chain" evidence="1">
    <location>
        <position position="17"/>
    </location>
    <ligand>
        <name>ATP</name>
        <dbReference type="ChEBI" id="CHEBI:30616"/>
        <note>ligand shared between two neighboring subunits</note>
    </ligand>
</feature>
<feature type="binding site" evidence="1">
    <location>
        <position position="19"/>
    </location>
    <ligand>
        <name>Mg(2+)</name>
        <dbReference type="ChEBI" id="CHEBI:18420"/>
    </ligand>
</feature>
<feature type="binding site" evidence="1">
    <location>
        <position position="45"/>
    </location>
    <ligand>
        <name>K(+)</name>
        <dbReference type="ChEBI" id="CHEBI:29103"/>
    </ligand>
</feature>
<feature type="binding site" description="in other chain" evidence="1">
    <location>
        <position position="58"/>
    </location>
    <ligand>
        <name>L-methionine</name>
        <dbReference type="ChEBI" id="CHEBI:57844"/>
        <note>ligand shared between two neighboring subunits</note>
    </ligand>
</feature>
<feature type="binding site" description="in other chain" evidence="1">
    <location>
        <position position="101"/>
    </location>
    <ligand>
        <name>L-methionine</name>
        <dbReference type="ChEBI" id="CHEBI:57844"/>
        <note>ligand shared between two neighboring subunits</note>
    </ligand>
</feature>
<feature type="binding site" description="in other chain" evidence="1">
    <location>
        <begin position="172"/>
        <end position="174"/>
    </location>
    <ligand>
        <name>ATP</name>
        <dbReference type="ChEBI" id="CHEBI:30616"/>
        <note>ligand shared between two neighboring subunits</note>
    </ligand>
</feature>
<feature type="binding site" description="in other chain" evidence="1">
    <location>
        <begin position="245"/>
        <end position="246"/>
    </location>
    <ligand>
        <name>ATP</name>
        <dbReference type="ChEBI" id="CHEBI:30616"/>
        <note>ligand shared between two neighboring subunits</note>
    </ligand>
</feature>
<feature type="binding site" evidence="1">
    <location>
        <position position="254"/>
    </location>
    <ligand>
        <name>ATP</name>
        <dbReference type="ChEBI" id="CHEBI:30616"/>
        <note>ligand shared between two neighboring subunits</note>
    </ligand>
</feature>
<feature type="binding site" evidence="1">
    <location>
        <position position="254"/>
    </location>
    <ligand>
        <name>L-methionine</name>
        <dbReference type="ChEBI" id="CHEBI:57844"/>
        <note>ligand shared between two neighboring subunits</note>
    </ligand>
</feature>
<feature type="binding site" description="in other chain" evidence="1">
    <location>
        <begin position="260"/>
        <end position="261"/>
    </location>
    <ligand>
        <name>ATP</name>
        <dbReference type="ChEBI" id="CHEBI:30616"/>
        <note>ligand shared between two neighboring subunits</note>
    </ligand>
</feature>
<feature type="binding site" evidence="1">
    <location>
        <position position="277"/>
    </location>
    <ligand>
        <name>ATP</name>
        <dbReference type="ChEBI" id="CHEBI:30616"/>
        <note>ligand shared between two neighboring subunits</note>
    </ligand>
</feature>
<feature type="binding site" evidence="1">
    <location>
        <position position="281"/>
    </location>
    <ligand>
        <name>ATP</name>
        <dbReference type="ChEBI" id="CHEBI:30616"/>
        <note>ligand shared between two neighboring subunits</note>
    </ligand>
</feature>
<feature type="binding site" description="in other chain" evidence="1">
    <location>
        <position position="285"/>
    </location>
    <ligand>
        <name>L-methionine</name>
        <dbReference type="ChEBI" id="CHEBI:57844"/>
        <note>ligand shared between two neighboring subunits</note>
    </ligand>
</feature>